<comment type="function">
    <text evidence="1">Exhibits a very high intrinsic GTPase hydrolysis rate. Involved in the addition of a carboxymethylaminomethyl (cmnm) group at the wobble position (U34) of certain tRNAs, forming tRNA-cmnm(5)s(2)U34.</text>
</comment>
<comment type="cofactor">
    <cofactor evidence="1">
        <name>K(+)</name>
        <dbReference type="ChEBI" id="CHEBI:29103"/>
    </cofactor>
    <text evidence="1">Binds 1 potassium ion per subunit.</text>
</comment>
<comment type="subunit">
    <text evidence="1">Homodimer. Heterotetramer of two MnmE and two MnmG subunits.</text>
</comment>
<comment type="subcellular location">
    <subcellularLocation>
        <location evidence="1">Cytoplasm</location>
    </subcellularLocation>
</comment>
<comment type="similarity">
    <text evidence="1">Belongs to the TRAFAC class TrmE-Era-EngA-EngB-Septin-like GTPase superfamily. TrmE GTPase family.</text>
</comment>
<dbReference type="EC" id="3.6.-.-" evidence="1"/>
<dbReference type="EMBL" id="CP000238">
    <property type="protein sequence ID" value="ABF13937.1"/>
    <property type="molecule type" value="Genomic_DNA"/>
</dbReference>
<dbReference type="RefSeq" id="WP_011520339.1">
    <property type="nucleotide sequence ID" value="NC_007984.1"/>
</dbReference>
<dbReference type="SMR" id="Q1LTV8"/>
<dbReference type="STRING" id="374463.BCI_0137"/>
<dbReference type="KEGG" id="bci:BCI_0137"/>
<dbReference type="HOGENOM" id="CLU_019624_4_1_6"/>
<dbReference type="OrthoDB" id="9805918at2"/>
<dbReference type="Proteomes" id="UP000002427">
    <property type="component" value="Chromosome"/>
</dbReference>
<dbReference type="GO" id="GO:0005829">
    <property type="term" value="C:cytosol"/>
    <property type="evidence" value="ECO:0007669"/>
    <property type="project" value="TreeGrafter"/>
</dbReference>
<dbReference type="GO" id="GO:0005525">
    <property type="term" value="F:GTP binding"/>
    <property type="evidence" value="ECO:0007669"/>
    <property type="project" value="UniProtKB-UniRule"/>
</dbReference>
<dbReference type="GO" id="GO:0003924">
    <property type="term" value="F:GTPase activity"/>
    <property type="evidence" value="ECO:0007669"/>
    <property type="project" value="UniProtKB-UniRule"/>
</dbReference>
<dbReference type="GO" id="GO:0046872">
    <property type="term" value="F:metal ion binding"/>
    <property type="evidence" value="ECO:0007669"/>
    <property type="project" value="UniProtKB-KW"/>
</dbReference>
<dbReference type="GO" id="GO:0030488">
    <property type="term" value="P:tRNA methylation"/>
    <property type="evidence" value="ECO:0007669"/>
    <property type="project" value="TreeGrafter"/>
</dbReference>
<dbReference type="GO" id="GO:0002098">
    <property type="term" value="P:tRNA wobble uridine modification"/>
    <property type="evidence" value="ECO:0007669"/>
    <property type="project" value="TreeGrafter"/>
</dbReference>
<dbReference type="CDD" id="cd04164">
    <property type="entry name" value="trmE"/>
    <property type="match status" value="1"/>
</dbReference>
<dbReference type="CDD" id="cd14858">
    <property type="entry name" value="TrmE_N"/>
    <property type="match status" value="1"/>
</dbReference>
<dbReference type="FunFam" id="3.30.1360.120:FF:000001">
    <property type="entry name" value="tRNA modification GTPase MnmE"/>
    <property type="match status" value="1"/>
</dbReference>
<dbReference type="Gene3D" id="3.40.50.300">
    <property type="entry name" value="P-loop containing nucleotide triphosphate hydrolases"/>
    <property type="match status" value="1"/>
</dbReference>
<dbReference type="Gene3D" id="3.30.1360.120">
    <property type="entry name" value="Probable tRNA modification gtpase trme, domain 1"/>
    <property type="match status" value="1"/>
</dbReference>
<dbReference type="Gene3D" id="1.20.120.430">
    <property type="entry name" value="tRNA modification GTPase MnmE domain 2"/>
    <property type="match status" value="1"/>
</dbReference>
<dbReference type="HAMAP" id="MF_00379">
    <property type="entry name" value="GTPase_MnmE"/>
    <property type="match status" value="1"/>
</dbReference>
<dbReference type="InterPro" id="IPR031168">
    <property type="entry name" value="G_TrmE"/>
</dbReference>
<dbReference type="InterPro" id="IPR006073">
    <property type="entry name" value="GTP-bd"/>
</dbReference>
<dbReference type="InterPro" id="IPR018948">
    <property type="entry name" value="GTP-bd_TrmE_N"/>
</dbReference>
<dbReference type="InterPro" id="IPR004520">
    <property type="entry name" value="GTPase_MnmE"/>
</dbReference>
<dbReference type="InterPro" id="IPR027368">
    <property type="entry name" value="MnmE_dom2"/>
</dbReference>
<dbReference type="InterPro" id="IPR025867">
    <property type="entry name" value="MnmE_helical"/>
</dbReference>
<dbReference type="InterPro" id="IPR027417">
    <property type="entry name" value="P-loop_NTPase"/>
</dbReference>
<dbReference type="InterPro" id="IPR005225">
    <property type="entry name" value="Small_GTP-bd"/>
</dbReference>
<dbReference type="InterPro" id="IPR027266">
    <property type="entry name" value="TrmE/GcvT_dom1"/>
</dbReference>
<dbReference type="NCBIfam" id="TIGR00450">
    <property type="entry name" value="mnmE_trmE_thdF"/>
    <property type="match status" value="1"/>
</dbReference>
<dbReference type="NCBIfam" id="NF003661">
    <property type="entry name" value="PRK05291.1-3"/>
    <property type="match status" value="1"/>
</dbReference>
<dbReference type="NCBIfam" id="TIGR00231">
    <property type="entry name" value="small_GTP"/>
    <property type="match status" value="1"/>
</dbReference>
<dbReference type="PANTHER" id="PTHR42714">
    <property type="entry name" value="TRNA MODIFICATION GTPASE GTPBP3"/>
    <property type="match status" value="1"/>
</dbReference>
<dbReference type="PANTHER" id="PTHR42714:SF2">
    <property type="entry name" value="TRNA MODIFICATION GTPASE GTPBP3, MITOCHONDRIAL"/>
    <property type="match status" value="1"/>
</dbReference>
<dbReference type="Pfam" id="PF01926">
    <property type="entry name" value="MMR_HSR1"/>
    <property type="match status" value="1"/>
</dbReference>
<dbReference type="Pfam" id="PF12631">
    <property type="entry name" value="MnmE_helical"/>
    <property type="match status" value="1"/>
</dbReference>
<dbReference type="Pfam" id="PF10396">
    <property type="entry name" value="TrmE_N"/>
    <property type="match status" value="1"/>
</dbReference>
<dbReference type="SUPFAM" id="SSF52540">
    <property type="entry name" value="P-loop containing nucleoside triphosphate hydrolases"/>
    <property type="match status" value="1"/>
</dbReference>
<dbReference type="PROSITE" id="PS51709">
    <property type="entry name" value="G_TRME"/>
    <property type="match status" value="1"/>
</dbReference>
<protein>
    <recommendedName>
        <fullName evidence="1">tRNA modification GTPase MnmE</fullName>
        <ecNumber evidence="1">3.6.-.-</ecNumber>
    </recommendedName>
</protein>
<evidence type="ECO:0000255" key="1">
    <source>
        <dbReference type="HAMAP-Rule" id="MF_00379"/>
    </source>
</evidence>
<proteinExistence type="inferred from homology"/>
<sequence length="457" mass="49944">MNLTFDTIAAQATPNGRGGIGIVRVSGTLTTRVAKELLGKVPIQRKAEYLTFYHQNGNIIDKGIALFFPGPNSFTGEDILELHGHGGPVVLDLLLQRIITLPGVRIARPGEFSERAFLNEKIDLAQAEAIADLIDANSAQAARAAISSLQGVFSTTINDLVEKLTSLRVDIEAKINFPEENETNVSIDKKIIANLDQAILSINKIRTAAYQGCILREGIKIVITGKPNVGKSSIINALAGHEVAIVTNIAGTTRDILREYIYLDGIPVSIIDTAGLCNVSHNEVEKIGIQRAWNEIKQADHILLVVDSSTTKLSEQDKLCNTLIANFPYKTPVTIIRNKADITGEKIGETLNNNYSVITISALSSLGIEILLKYLTKIISLPSSTEGVFLARRRHLEALEITANYLLQCKEKISFPTMLELIAEDLQLAHNALSQITGKFSSHELLKKIFSRFCLGK</sequence>
<reference key="1">
    <citation type="journal article" date="2006" name="PLoS Biol.">
        <title>Metabolic complementarity and genomics of the dual bacterial symbiosis of sharpshooters.</title>
        <authorList>
            <person name="Wu D."/>
            <person name="Daugherty S.C."/>
            <person name="Van Aken S.E."/>
            <person name="Pai G.H."/>
            <person name="Watkins K.L."/>
            <person name="Khouri H."/>
            <person name="Tallon L.J."/>
            <person name="Zaborsky J.M."/>
            <person name="Dunbar H.E."/>
            <person name="Tran P.L."/>
            <person name="Moran N.A."/>
            <person name="Eisen J.A."/>
        </authorList>
    </citation>
    <scope>NUCLEOTIDE SEQUENCE [LARGE SCALE GENOMIC DNA]</scope>
</reference>
<organism>
    <name type="scientific">Baumannia cicadellinicola subsp. Homalodisca coagulata</name>
    <dbReference type="NCBI Taxonomy" id="374463"/>
    <lineage>
        <taxon>Bacteria</taxon>
        <taxon>Pseudomonadati</taxon>
        <taxon>Pseudomonadota</taxon>
        <taxon>Gammaproteobacteria</taxon>
        <taxon>Candidatus Palibaumannia</taxon>
    </lineage>
</organism>
<gene>
    <name evidence="1" type="primary">mnmE</name>
    <name evidence="1" type="synonym">trmE</name>
    <name type="ordered locus">BCI_0137</name>
</gene>
<name>MNME_BAUCH</name>
<keyword id="KW-0963">Cytoplasm</keyword>
<keyword id="KW-0342">GTP-binding</keyword>
<keyword id="KW-0378">Hydrolase</keyword>
<keyword id="KW-0460">Magnesium</keyword>
<keyword id="KW-0479">Metal-binding</keyword>
<keyword id="KW-0547">Nucleotide-binding</keyword>
<keyword id="KW-0630">Potassium</keyword>
<keyword id="KW-1185">Reference proteome</keyword>
<keyword id="KW-0819">tRNA processing</keyword>
<accession>Q1LTV8</accession>
<feature type="chain" id="PRO_1000048804" description="tRNA modification GTPase MnmE">
    <location>
        <begin position="1"/>
        <end position="457"/>
    </location>
</feature>
<feature type="domain" description="TrmE-type G">
    <location>
        <begin position="218"/>
        <end position="380"/>
    </location>
</feature>
<feature type="binding site" evidence="1">
    <location>
        <position position="24"/>
    </location>
    <ligand>
        <name>(6S)-5-formyl-5,6,7,8-tetrahydrofolate</name>
        <dbReference type="ChEBI" id="CHEBI:57457"/>
    </ligand>
</feature>
<feature type="binding site" evidence="1">
    <location>
        <position position="81"/>
    </location>
    <ligand>
        <name>(6S)-5-formyl-5,6,7,8-tetrahydrofolate</name>
        <dbReference type="ChEBI" id="CHEBI:57457"/>
    </ligand>
</feature>
<feature type="binding site" evidence="1">
    <location>
        <position position="121"/>
    </location>
    <ligand>
        <name>(6S)-5-formyl-5,6,7,8-tetrahydrofolate</name>
        <dbReference type="ChEBI" id="CHEBI:57457"/>
    </ligand>
</feature>
<feature type="binding site" evidence="1">
    <location>
        <begin position="228"/>
        <end position="233"/>
    </location>
    <ligand>
        <name>GTP</name>
        <dbReference type="ChEBI" id="CHEBI:37565"/>
    </ligand>
</feature>
<feature type="binding site" evidence="1">
    <location>
        <position position="228"/>
    </location>
    <ligand>
        <name>K(+)</name>
        <dbReference type="ChEBI" id="CHEBI:29103"/>
    </ligand>
</feature>
<feature type="binding site" evidence="1">
    <location>
        <position position="232"/>
    </location>
    <ligand>
        <name>Mg(2+)</name>
        <dbReference type="ChEBI" id="CHEBI:18420"/>
    </ligand>
</feature>
<feature type="binding site" evidence="1">
    <location>
        <begin position="247"/>
        <end position="253"/>
    </location>
    <ligand>
        <name>GTP</name>
        <dbReference type="ChEBI" id="CHEBI:37565"/>
    </ligand>
</feature>
<feature type="binding site" evidence="1">
    <location>
        <position position="247"/>
    </location>
    <ligand>
        <name>K(+)</name>
        <dbReference type="ChEBI" id="CHEBI:29103"/>
    </ligand>
</feature>
<feature type="binding site" evidence="1">
    <location>
        <position position="249"/>
    </location>
    <ligand>
        <name>K(+)</name>
        <dbReference type="ChEBI" id="CHEBI:29103"/>
    </ligand>
</feature>
<feature type="binding site" evidence="1">
    <location>
        <position position="252"/>
    </location>
    <ligand>
        <name>K(+)</name>
        <dbReference type="ChEBI" id="CHEBI:29103"/>
    </ligand>
</feature>
<feature type="binding site" evidence="1">
    <location>
        <position position="253"/>
    </location>
    <ligand>
        <name>Mg(2+)</name>
        <dbReference type="ChEBI" id="CHEBI:18420"/>
    </ligand>
</feature>
<feature type="binding site" evidence="1">
    <location>
        <begin position="272"/>
        <end position="275"/>
    </location>
    <ligand>
        <name>GTP</name>
        <dbReference type="ChEBI" id="CHEBI:37565"/>
    </ligand>
</feature>
<feature type="binding site" evidence="1">
    <location>
        <begin position="338"/>
        <end position="341"/>
    </location>
    <ligand>
        <name>GTP</name>
        <dbReference type="ChEBI" id="CHEBI:37565"/>
    </ligand>
</feature>
<feature type="binding site" evidence="1">
    <location>
        <position position="457"/>
    </location>
    <ligand>
        <name>(6S)-5-formyl-5,6,7,8-tetrahydrofolate</name>
        <dbReference type="ChEBI" id="CHEBI:57457"/>
    </ligand>
</feature>